<sequence length="310" mass="35260">MASYDLVERLNNTFRQIELELQALQQALSDCRLLAGRVFELPAIGKDAEHDPLATIPVVQHIGKTALARALRHYSHLFIQQQSENRSSKAAVRLPGAICLQVTAAEQQDLLARIQHINALKATFEKIVTVDSGLPPTARFEWVHRHLPGLITLSAYRTLTPLVDPSTIRFGWANKHVIKNLTRDQVLMMLEKSLQAPRAVPPWTREQWQSKLEREYQDIAALPQRARLKIKRPVKVQPIARVWYAGEQKQVQYACPSPLIALMSGSREVSVPDIGELLNYDADNVQYRYKPEAQSLRLLIPRLHLWLASE</sequence>
<reference key="1">
    <citation type="submission" date="2006-09" db="EMBL/GenBank/DDBJ databases">
        <authorList>
            <consortium name="The Klebsiella pneumonia Genome Sequencing Project"/>
            <person name="McClelland M."/>
            <person name="Sanderson E.K."/>
            <person name="Spieth J."/>
            <person name="Clifton W.S."/>
            <person name="Latreille P."/>
            <person name="Sabo A."/>
            <person name="Pepin K."/>
            <person name="Bhonagiri V."/>
            <person name="Porwollik S."/>
            <person name="Ali J."/>
            <person name="Wilson R.K."/>
        </authorList>
    </citation>
    <scope>NUCLEOTIDE SEQUENCE [LARGE SCALE GENOMIC DNA]</scope>
    <source>
        <strain>ATCC 700721 / MGH 78578</strain>
    </source>
</reference>
<name>TUS_KLEP7</name>
<dbReference type="EMBL" id="CP000647">
    <property type="protein sequence ID" value="ABR76949.1"/>
    <property type="molecule type" value="Genomic_DNA"/>
</dbReference>
<dbReference type="RefSeq" id="WP_015958355.1">
    <property type="nucleotide sequence ID" value="NC_009648.1"/>
</dbReference>
<dbReference type="SMR" id="A6T8M8"/>
<dbReference type="STRING" id="272620.KPN_01518"/>
<dbReference type="PaxDb" id="272620-KPN_01518"/>
<dbReference type="EnsemblBacteria" id="ABR76949">
    <property type="protein sequence ID" value="ABR76949"/>
    <property type="gene ID" value="KPN_01518"/>
</dbReference>
<dbReference type="KEGG" id="kpn:KPN_01518"/>
<dbReference type="HOGENOM" id="CLU_078181_0_0_6"/>
<dbReference type="Proteomes" id="UP000000265">
    <property type="component" value="Chromosome"/>
</dbReference>
<dbReference type="GO" id="GO:0005737">
    <property type="term" value="C:cytoplasm"/>
    <property type="evidence" value="ECO:0007669"/>
    <property type="project" value="UniProtKB-SubCell"/>
</dbReference>
<dbReference type="GO" id="GO:0003677">
    <property type="term" value="F:DNA binding"/>
    <property type="evidence" value="ECO:0007669"/>
    <property type="project" value="UniProtKB-UniRule"/>
</dbReference>
<dbReference type="GO" id="GO:0006274">
    <property type="term" value="P:DNA replication termination"/>
    <property type="evidence" value="ECO:0007669"/>
    <property type="project" value="UniProtKB-UniRule"/>
</dbReference>
<dbReference type="Gene3D" id="3.30.54.10">
    <property type="match status" value="1"/>
</dbReference>
<dbReference type="Gene3D" id="3.50.14.10">
    <property type="entry name" value="Replication terminator Tus, domain 1 superfamily/Replication terminator Tus"/>
    <property type="match status" value="1"/>
</dbReference>
<dbReference type="HAMAP" id="MF_00483">
    <property type="entry name" value="Rep_term_Tus"/>
    <property type="match status" value="1"/>
</dbReference>
<dbReference type="InterPro" id="IPR008865">
    <property type="entry name" value="DNA_replication_term_site-bd"/>
</dbReference>
<dbReference type="InterPro" id="IPR036381">
    <property type="entry name" value="Tus_dom1"/>
</dbReference>
<dbReference type="InterPro" id="IPR036384">
    <property type="entry name" value="Tus_sf"/>
</dbReference>
<dbReference type="NCBIfam" id="TIGR02648">
    <property type="entry name" value="rep_term_tus"/>
    <property type="match status" value="1"/>
</dbReference>
<dbReference type="Pfam" id="PF05472">
    <property type="entry name" value="Ter"/>
    <property type="match status" value="1"/>
</dbReference>
<dbReference type="SUPFAM" id="SSF56596">
    <property type="entry name" value="Replication terminator protein (Tus)"/>
    <property type="match status" value="1"/>
</dbReference>
<proteinExistence type="inferred from homology"/>
<evidence type="ECO:0000255" key="1">
    <source>
        <dbReference type="HAMAP-Rule" id="MF_00483"/>
    </source>
</evidence>
<comment type="function">
    <text evidence="1">Trans-acting protein required for termination of DNA replication. Binds to DNA replication terminator sequences (terA to terF) to prevent the passage of replication forks. The termination efficiency will be affected by the affinity of this protein for the terminator sequence.</text>
</comment>
<comment type="subcellular location">
    <subcellularLocation>
        <location evidence="1">Cytoplasm</location>
    </subcellularLocation>
</comment>
<comment type="similarity">
    <text evidence="1">Belongs to the Tus family.</text>
</comment>
<feature type="chain" id="PRO_1000014332" description="DNA replication terminus site-binding protein">
    <location>
        <begin position="1"/>
        <end position="310"/>
    </location>
</feature>
<protein>
    <recommendedName>
        <fullName evidence="1">DNA replication terminus site-binding protein</fullName>
        <shortName evidence="1">Ter-binding protein</shortName>
    </recommendedName>
</protein>
<accession>A6T8M8</accession>
<gene>
    <name evidence="1" type="primary">tus</name>
    <name type="ordered locus">KPN78578_14880</name>
    <name type="ORF">KPN_01518</name>
</gene>
<organism>
    <name type="scientific">Klebsiella pneumoniae subsp. pneumoniae (strain ATCC 700721 / MGH 78578)</name>
    <dbReference type="NCBI Taxonomy" id="272620"/>
    <lineage>
        <taxon>Bacteria</taxon>
        <taxon>Pseudomonadati</taxon>
        <taxon>Pseudomonadota</taxon>
        <taxon>Gammaproteobacteria</taxon>
        <taxon>Enterobacterales</taxon>
        <taxon>Enterobacteriaceae</taxon>
        <taxon>Klebsiella/Raoultella group</taxon>
        <taxon>Klebsiella</taxon>
        <taxon>Klebsiella pneumoniae complex</taxon>
    </lineage>
</organism>
<keyword id="KW-0963">Cytoplasm</keyword>
<keyword id="KW-0235">DNA replication</keyword>
<keyword id="KW-0238">DNA-binding</keyword>